<comment type="function">
    <text evidence="1">ATP-dependent specificity component of the Clp protease. It directs the protease to specific substrates. Can perform chaperone functions in the absence of ClpP.</text>
</comment>
<comment type="subunit">
    <text evidence="1">Component of the ClpX-ClpP complex. Forms a hexameric ring that, in the presence of ATP, binds to fourteen ClpP subunits assembled into a disk-like structure with a central cavity, resembling the structure of eukaryotic proteasomes.</text>
</comment>
<comment type="similarity">
    <text evidence="1">Belongs to the ClpX chaperone family.</text>
</comment>
<sequence length="426" mass="46550">MSDNKSTGDSGKLLYCSFCGKSQHEVRKLIAGPSVYVCDECVELCNDIIREEIKEISPKQDQDKLPTPHELRAHLDDYVIGQEKAKKVLSVAVYNHYKRLKNAGPKDGVELGKSNILLIGPTGSGKTLLAETLARFLNVPFTMADATTLTEAGYVGEDVENIIQKLLQKCDYDVEKAQRGIVYIDEIDKISRKSDNPSITRDVSGEGVQQALLKLIEGTIAAVPPQGGRKHPQQEFLQVDTSKILFVCGGAFSGLEKVIEQRSHTGTGIGFGAQVKGEDDKATISDTLMQVEPEDLVKYGLIPEFIGRLPVLATLAELDDAALIQILSEPKNALTKQFAALFEMEDVELEFREDALKAIALKAKTRKTGARGLRSIVEGILLDIMYDLPSTDNVAKVVIDESVVKGESTPILIYENSESQAASAEQ</sequence>
<evidence type="ECO:0000255" key="1">
    <source>
        <dbReference type="HAMAP-Rule" id="MF_00175"/>
    </source>
</evidence>
<evidence type="ECO:0000255" key="2">
    <source>
        <dbReference type="PROSITE-ProRule" id="PRU01250"/>
    </source>
</evidence>
<name>CLPX_SHEWM</name>
<proteinExistence type="inferred from homology"/>
<organism>
    <name type="scientific">Shewanella woodyi (strain ATCC 51908 / MS32)</name>
    <dbReference type="NCBI Taxonomy" id="392500"/>
    <lineage>
        <taxon>Bacteria</taxon>
        <taxon>Pseudomonadati</taxon>
        <taxon>Pseudomonadota</taxon>
        <taxon>Gammaproteobacteria</taxon>
        <taxon>Alteromonadales</taxon>
        <taxon>Shewanellaceae</taxon>
        <taxon>Shewanella</taxon>
    </lineage>
</organism>
<reference key="1">
    <citation type="submission" date="2008-02" db="EMBL/GenBank/DDBJ databases">
        <title>Complete sequence of Shewanella woodyi ATCC 51908.</title>
        <authorList>
            <consortium name="US DOE Joint Genome Institute"/>
            <person name="Copeland A."/>
            <person name="Lucas S."/>
            <person name="Lapidus A."/>
            <person name="Glavina del Rio T."/>
            <person name="Dalin E."/>
            <person name="Tice H."/>
            <person name="Bruce D."/>
            <person name="Goodwin L."/>
            <person name="Pitluck S."/>
            <person name="Sims D."/>
            <person name="Brettin T."/>
            <person name="Detter J.C."/>
            <person name="Han C."/>
            <person name="Kuske C.R."/>
            <person name="Schmutz J."/>
            <person name="Larimer F."/>
            <person name="Land M."/>
            <person name="Hauser L."/>
            <person name="Kyrpides N."/>
            <person name="Lykidis A."/>
            <person name="Zhao J.-S."/>
            <person name="Richardson P."/>
        </authorList>
    </citation>
    <scope>NUCLEOTIDE SEQUENCE [LARGE SCALE GENOMIC DNA]</scope>
    <source>
        <strain>ATCC 51908 / MS32</strain>
    </source>
</reference>
<dbReference type="EMBL" id="CP000961">
    <property type="protein sequence ID" value="ACA87383.1"/>
    <property type="molecule type" value="Genomic_DNA"/>
</dbReference>
<dbReference type="RefSeq" id="WP_012325719.1">
    <property type="nucleotide sequence ID" value="NC_010506.1"/>
</dbReference>
<dbReference type="SMR" id="B1KLT6"/>
<dbReference type="STRING" id="392500.Swoo_3112"/>
<dbReference type="KEGG" id="swd:Swoo_3112"/>
<dbReference type="eggNOG" id="COG1219">
    <property type="taxonomic scope" value="Bacteria"/>
</dbReference>
<dbReference type="HOGENOM" id="CLU_014218_8_2_6"/>
<dbReference type="Proteomes" id="UP000002168">
    <property type="component" value="Chromosome"/>
</dbReference>
<dbReference type="GO" id="GO:0009376">
    <property type="term" value="C:HslUV protease complex"/>
    <property type="evidence" value="ECO:0007669"/>
    <property type="project" value="TreeGrafter"/>
</dbReference>
<dbReference type="GO" id="GO:0005524">
    <property type="term" value="F:ATP binding"/>
    <property type="evidence" value="ECO:0007669"/>
    <property type="project" value="UniProtKB-UniRule"/>
</dbReference>
<dbReference type="GO" id="GO:0016887">
    <property type="term" value="F:ATP hydrolysis activity"/>
    <property type="evidence" value="ECO:0007669"/>
    <property type="project" value="InterPro"/>
</dbReference>
<dbReference type="GO" id="GO:0140662">
    <property type="term" value="F:ATP-dependent protein folding chaperone"/>
    <property type="evidence" value="ECO:0007669"/>
    <property type="project" value="InterPro"/>
</dbReference>
<dbReference type="GO" id="GO:0046983">
    <property type="term" value="F:protein dimerization activity"/>
    <property type="evidence" value="ECO:0007669"/>
    <property type="project" value="InterPro"/>
</dbReference>
<dbReference type="GO" id="GO:0051082">
    <property type="term" value="F:unfolded protein binding"/>
    <property type="evidence" value="ECO:0007669"/>
    <property type="project" value="UniProtKB-UniRule"/>
</dbReference>
<dbReference type="GO" id="GO:0008270">
    <property type="term" value="F:zinc ion binding"/>
    <property type="evidence" value="ECO:0007669"/>
    <property type="project" value="InterPro"/>
</dbReference>
<dbReference type="GO" id="GO:0051301">
    <property type="term" value="P:cell division"/>
    <property type="evidence" value="ECO:0007669"/>
    <property type="project" value="TreeGrafter"/>
</dbReference>
<dbReference type="GO" id="GO:0051603">
    <property type="term" value="P:proteolysis involved in protein catabolic process"/>
    <property type="evidence" value="ECO:0007669"/>
    <property type="project" value="TreeGrafter"/>
</dbReference>
<dbReference type="CDD" id="cd19497">
    <property type="entry name" value="RecA-like_ClpX"/>
    <property type="match status" value="1"/>
</dbReference>
<dbReference type="FunFam" id="1.10.8.60:FF:000002">
    <property type="entry name" value="ATP-dependent Clp protease ATP-binding subunit ClpX"/>
    <property type="match status" value="1"/>
</dbReference>
<dbReference type="FunFam" id="3.40.50.300:FF:000005">
    <property type="entry name" value="ATP-dependent Clp protease ATP-binding subunit ClpX"/>
    <property type="match status" value="1"/>
</dbReference>
<dbReference type="Gene3D" id="1.10.8.60">
    <property type="match status" value="1"/>
</dbReference>
<dbReference type="Gene3D" id="6.20.220.10">
    <property type="entry name" value="ClpX chaperone, C4-type zinc finger domain"/>
    <property type="match status" value="1"/>
</dbReference>
<dbReference type="Gene3D" id="3.40.50.300">
    <property type="entry name" value="P-loop containing nucleotide triphosphate hydrolases"/>
    <property type="match status" value="1"/>
</dbReference>
<dbReference type="HAMAP" id="MF_00175">
    <property type="entry name" value="ClpX"/>
    <property type="match status" value="1"/>
</dbReference>
<dbReference type="InterPro" id="IPR003593">
    <property type="entry name" value="AAA+_ATPase"/>
</dbReference>
<dbReference type="InterPro" id="IPR050052">
    <property type="entry name" value="ATP-dep_Clp_protease_ClpX"/>
</dbReference>
<dbReference type="InterPro" id="IPR003959">
    <property type="entry name" value="ATPase_AAA_core"/>
</dbReference>
<dbReference type="InterPro" id="IPR019489">
    <property type="entry name" value="Clp_ATPase_C"/>
</dbReference>
<dbReference type="InterPro" id="IPR004487">
    <property type="entry name" value="Clp_protease_ATP-bd_su_ClpX"/>
</dbReference>
<dbReference type="InterPro" id="IPR046425">
    <property type="entry name" value="ClpX_bact"/>
</dbReference>
<dbReference type="InterPro" id="IPR027417">
    <property type="entry name" value="P-loop_NTPase"/>
</dbReference>
<dbReference type="InterPro" id="IPR010603">
    <property type="entry name" value="Znf_CppX_C4"/>
</dbReference>
<dbReference type="InterPro" id="IPR038366">
    <property type="entry name" value="Znf_CppX_C4_sf"/>
</dbReference>
<dbReference type="NCBIfam" id="TIGR00382">
    <property type="entry name" value="clpX"/>
    <property type="match status" value="1"/>
</dbReference>
<dbReference type="NCBIfam" id="NF003745">
    <property type="entry name" value="PRK05342.1"/>
    <property type="match status" value="1"/>
</dbReference>
<dbReference type="PANTHER" id="PTHR48102:SF7">
    <property type="entry name" value="ATP-DEPENDENT CLP PROTEASE ATP-BINDING SUBUNIT CLPX-LIKE, MITOCHONDRIAL"/>
    <property type="match status" value="1"/>
</dbReference>
<dbReference type="PANTHER" id="PTHR48102">
    <property type="entry name" value="ATP-DEPENDENT CLP PROTEASE ATP-BINDING SUBUNIT CLPX-LIKE, MITOCHONDRIAL-RELATED"/>
    <property type="match status" value="1"/>
</dbReference>
<dbReference type="Pfam" id="PF07724">
    <property type="entry name" value="AAA_2"/>
    <property type="match status" value="1"/>
</dbReference>
<dbReference type="Pfam" id="PF10431">
    <property type="entry name" value="ClpB_D2-small"/>
    <property type="match status" value="1"/>
</dbReference>
<dbReference type="Pfam" id="PF06689">
    <property type="entry name" value="zf-C4_ClpX"/>
    <property type="match status" value="1"/>
</dbReference>
<dbReference type="SMART" id="SM00382">
    <property type="entry name" value="AAA"/>
    <property type="match status" value="1"/>
</dbReference>
<dbReference type="SMART" id="SM01086">
    <property type="entry name" value="ClpB_D2-small"/>
    <property type="match status" value="1"/>
</dbReference>
<dbReference type="SMART" id="SM00994">
    <property type="entry name" value="zf-C4_ClpX"/>
    <property type="match status" value="1"/>
</dbReference>
<dbReference type="SUPFAM" id="SSF57716">
    <property type="entry name" value="Glucocorticoid receptor-like (DNA-binding domain)"/>
    <property type="match status" value="1"/>
</dbReference>
<dbReference type="SUPFAM" id="SSF52540">
    <property type="entry name" value="P-loop containing nucleoside triphosphate hydrolases"/>
    <property type="match status" value="1"/>
</dbReference>
<dbReference type="PROSITE" id="PS51902">
    <property type="entry name" value="CLPX_ZB"/>
    <property type="match status" value="1"/>
</dbReference>
<feature type="chain" id="PRO_1000098001" description="ATP-dependent Clp protease ATP-binding subunit ClpX">
    <location>
        <begin position="1"/>
        <end position="426"/>
    </location>
</feature>
<feature type="domain" description="ClpX-type ZB" evidence="2">
    <location>
        <begin position="4"/>
        <end position="57"/>
    </location>
</feature>
<feature type="binding site" evidence="2">
    <location>
        <position position="16"/>
    </location>
    <ligand>
        <name>Zn(2+)</name>
        <dbReference type="ChEBI" id="CHEBI:29105"/>
    </ligand>
</feature>
<feature type="binding site" evidence="2">
    <location>
        <position position="19"/>
    </location>
    <ligand>
        <name>Zn(2+)</name>
        <dbReference type="ChEBI" id="CHEBI:29105"/>
    </ligand>
</feature>
<feature type="binding site" evidence="2">
    <location>
        <position position="38"/>
    </location>
    <ligand>
        <name>Zn(2+)</name>
        <dbReference type="ChEBI" id="CHEBI:29105"/>
    </ligand>
</feature>
<feature type="binding site" evidence="2">
    <location>
        <position position="41"/>
    </location>
    <ligand>
        <name>Zn(2+)</name>
        <dbReference type="ChEBI" id="CHEBI:29105"/>
    </ligand>
</feature>
<feature type="binding site" evidence="1">
    <location>
        <begin position="121"/>
        <end position="128"/>
    </location>
    <ligand>
        <name>ATP</name>
        <dbReference type="ChEBI" id="CHEBI:30616"/>
    </ligand>
</feature>
<keyword id="KW-0067">ATP-binding</keyword>
<keyword id="KW-0143">Chaperone</keyword>
<keyword id="KW-0479">Metal-binding</keyword>
<keyword id="KW-0547">Nucleotide-binding</keyword>
<keyword id="KW-1185">Reference proteome</keyword>
<keyword id="KW-0862">Zinc</keyword>
<accession>B1KLT6</accession>
<protein>
    <recommendedName>
        <fullName evidence="1">ATP-dependent Clp protease ATP-binding subunit ClpX</fullName>
    </recommendedName>
</protein>
<gene>
    <name evidence="1" type="primary">clpX</name>
    <name type="ordered locus">Swoo_3112</name>
</gene>